<organism>
    <name type="scientific">Brachyspira hyodysenteriae (strain ATCC 49526 / WA1)</name>
    <dbReference type="NCBI Taxonomy" id="565034"/>
    <lineage>
        <taxon>Bacteria</taxon>
        <taxon>Pseudomonadati</taxon>
        <taxon>Spirochaetota</taxon>
        <taxon>Spirochaetia</taxon>
        <taxon>Brachyspirales</taxon>
        <taxon>Brachyspiraceae</taxon>
        <taxon>Brachyspira</taxon>
    </lineage>
</organism>
<gene>
    <name type="ordered locus">BHWA1_01533</name>
</gene>
<reference key="1">
    <citation type="journal article" date="2009" name="PLoS ONE">
        <title>Genome sequence of the pathogenic intestinal spirochete Brachyspira hyodysenteriae reveals adaptations to its lifestyle in the porcine large intestine.</title>
        <authorList>
            <person name="Bellgard M.I."/>
            <person name="Wanchanthuek P."/>
            <person name="La T."/>
            <person name="Ryan K."/>
            <person name="Moolhuijzen P."/>
            <person name="Albertyn Z."/>
            <person name="Shaban B."/>
            <person name="Motro Y."/>
            <person name="Dunn D.S."/>
            <person name="Schibeci D."/>
            <person name="Hunter A."/>
            <person name="Barrero R."/>
            <person name="Phillips N.D."/>
            <person name="Hampson D.J."/>
        </authorList>
    </citation>
    <scope>NUCLEOTIDE SEQUENCE [LARGE SCALE GENOMIC DNA]</scope>
    <source>
        <strain>ATCC 49526 / WA1</strain>
    </source>
</reference>
<protein>
    <recommendedName>
        <fullName evidence="1">Probable transcriptional regulatory protein BHWA1_01533</fullName>
    </recommendedName>
</protein>
<keyword id="KW-0963">Cytoplasm</keyword>
<keyword id="KW-0238">DNA-binding</keyword>
<keyword id="KW-0804">Transcription</keyword>
<keyword id="KW-0805">Transcription regulation</keyword>
<dbReference type="EMBL" id="CP001357">
    <property type="protein sequence ID" value="ACN84003.1"/>
    <property type="molecule type" value="Genomic_DNA"/>
</dbReference>
<dbReference type="RefSeq" id="WP_012671045.1">
    <property type="nucleotide sequence ID" value="NC_012225.1"/>
</dbReference>
<dbReference type="SMR" id="C0R1L5"/>
<dbReference type="STRING" id="565034.BHWA1_01533"/>
<dbReference type="KEGG" id="bhy:BHWA1_01533"/>
<dbReference type="eggNOG" id="COG0217">
    <property type="taxonomic scope" value="Bacteria"/>
</dbReference>
<dbReference type="HOGENOM" id="CLU_062974_2_2_12"/>
<dbReference type="Proteomes" id="UP000001803">
    <property type="component" value="Chromosome"/>
</dbReference>
<dbReference type="GO" id="GO:0005829">
    <property type="term" value="C:cytosol"/>
    <property type="evidence" value="ECO:0007669"/>
    <property type="project" value="TreeGrafter"/>
</dbReference>
<dbReference type="GO" id="GO:0003677">
    <property type="term" value="F:DNA binding"/>
    <property type="evidence" value="ECO:0007669"/>
    <property type="project" value="UniProtKB-UniRule"/>
</dbReference>
<dbReference type="GO" id="GO:0006355">
    <property type="term" value="P:regulation of DNA-templated transcription"/>
    <property type="evidence" value="ECO:0007669"/>
    <property type="project" value="UniProtKB-UniRule"/>
</dbReference>
<dbReference type="FunFam" id="1.10.10.200:FF:000002">
    <property type="entry name" value="Probable transcriptional regulatory protein CLM62_37755"/>
    <property type="match status" value="1"/>
</dbReference>
<dbReference type="Gene3D" id="1.10.10.200">
    <property type="match status" value="1"/>
</dbReference>
<dbReference type="Gene3D" id="3.30.70.980">
    <property type="match status" value="2"/>
</dbReference>
<dbReference type="HAMAP" id="MF_00693">
    <property type="entry name" value="Transcrip_reg_TACO1"/>
    <property type="match status" value="1"/>
</dbReference>
<dbReference type="InterPro" id="IPR017856">
    <property type="entry name" value="Integrase-like_N"/>
</dbReference>
<dbReference type="InterPro" id="IPR048300">
    <property type="entry name" value="TACO1_YebC-like_2nd/3rd_dom"/>
</dbReference>
<dbReference type="InterPro" id="IPR049083">
    <property type="entry name" value="TACO1_YebC_N"/>
</dbReference>
<dbReference type="InterPro" id="IPR002876">
    <property type="entry name" value="Transcrip_reg_TACO1-like"/>
</dbReference>
<dbReference type="InterPro" id="IPR026564">
    <property type="entry name" value="Transcrip_reg_TACO1-like_dom3"/>
</dbReference>
<dbReference type="InterPro" id="IPR029072">
    <property type="entry name" value="YebC-like"/>
</dbReference>
<dbReference type="NCBIfam" id="NF001030">
    <property type="entry name" value="PRK00110.1"/>
    <property type="match status" value="1"/>
</dbReference>
<dbReference type="NCBIfam" id="NF009044">
    <property type="entry name" value="PRK12378.1"/>
    <property type="match status" value="1"/>
</dbReference>
<dbReference type="NCBIfam" id="TIGR01033">
    <property type="entry name" value="YebC/PmpR family DNA-binding transcriptional regulator"/>
    <property type="match status" value="1"/>
</dbReference>
<dbReference type="PANTHER" id="PTHR12532:SF6">
    <property type="entry name" value="TRANSCRIPTIONAL REGULATORY PROTEIN YEBC-RELATED"/>
    <property type="match status" value="1"/>
</dbReference>
<dbReference type="PANTHER" id="PTHR12532">
    <property type="entry name" value="TRANSLATIONAL ACTIVATOR OF CYTOCHROME C OXIDASE 1"/>
    <property type="match status" value="1"/>
</dbReference>
<dbReference type="Pfam" id="PF20772">
    <property type="entry name" value="TACO1_YebC_N"/>
    <property type="match status" value="1"/>
</dbReference>
<dbReference type="Pfam" id="PF01709">
    <property type="entry name" value="Transcrip_reg"/>
    <property type="match status" value="1"/>
</dbReference>
<dbReference type="SUPFAM" id="SSF75625">
    <property type="entry name" value="YebC-like"/>
    <property type="match status" value="1"/>
</dbReference>
<comment type="subcellular location">
    <subcellularLocation>
        <location evidence="1">Cytoplasm</location>
    </subcellularLocation>
</comment>
<comment type="similarity">
    <text evidence="1">Belongs to the TACO1 family.</text>
</comment>
<feature type="chain" id="PRO_1000200081" description="Probable transcriptional regulatory protein BHWA1_01533">
    <location>
        <begin position="1"/>
        <end position="247"/>
    </location>
</feature>
<feature type="region of interest" description="Disordered" evidence="2">
    <location>
        <begin position="1"/>
        <end position="22"/>
    </location>
</feature>
<evidence type="ECO:0000255" key="1">
    <source>
        <dbReference type="HAMAP-Rule" id="MF_00693"/>
    </source>
</evidence>
<evidence type="ECO:0000256" key="2">
    <source>
        <dbReference type="SAM" id="MobiDB-lite"/>
    </source>
</evidence>
<accession>C0R1L5</accession>
<name>Y1533_BRAHW</name>
<sequence length="247" mass="26453">MSGHSKWASIKHKKAANDSKKGKIWSKIAKEITIAVKEGGSPDPDQNARLRMVIVKAKGTNMPNDNIDRAIKRGAGAGEGANIEEMSYEGYAPGGVAIIVDVATDNKNRTAAEIRSIFSKNGGNLAENGAVSWQFKKKAVVMIPAAGNTEESLMDIVLDAGAEDIEQDEEVFTITGPMETLSSIVDALKAKGIEPESAEIVRVADNTMTIAENDAKKVMKIIGLFEDHDDVSAVATNLEITDNLIEE</sequence>
<proteinExistence type="inferred from homology"/>